<comment type="function">
    <text evidence="2 3 4">Receptor required for the peroxisomal import of proteins containing a C-terminal PTS2-type peroxisomal targeting signal, such as 3-oxoacyl-CoA thiolase (PubMed:25009284, PubMed:9472033). Specifically binds to cargo proteins containing a PTS2 peroxisomal targeting signal in the cytosol (PubMed:25009284). Cargo protein-binding triggers interaction with PEX20 and formation of a ternary complex composed of PEX20 and PEX7 along with PTS2-containing cargo proteins, which is tranlocated into peroxisomes by passing through the peroxisomal docking complex (PubMed:16390998, PubMed:25009284). PEX7 receptor is then retrotranslocated into the cytosol, where it is ubiquitinated and degraded (PubMed:25009284).</text>
</comment>
<comment type="subunit">
    <text evidence="2">Interacts with PEX20.</text>
</comment>
<comment type="subcellular location">
    <subcellularLocation>
        <location evidence="3 4">Cytoplasm</location>
        <location evidence="3 4">Cytosol</location>
    </subcellularLocation>
    <subcellularLocation>
        <location evidence="3 4">Peroxisome matrix</location>
    </subcellularLocation>
</comment>
<comment type="PTM">
    <text evidence="3">Polyubiquitinated, leading to its degradation by the proteasome (PubMed:25009284). Ubiquitination is dependent of PEX5 and PEX20 and takes place following recycling into the cytosol (PubMed:25009284).</text>
</comment>
<comment type="disruption phenotype">
    <text evidence="4">Specifically disturbs in the peroxisomal import of proteins containing a peroxisomal targeting signal type II (PTS2), and fails to grow on oleate.</text>
</comment>
<comment type="similarity">
    <text evidence="7">Belongs to the WD repeat peroxin-7 family.</text>
</comment>
<gene>
    <name evidence="5" type="primary">PEX7</name>
</gene>
<accession>O59894</accession>
<dbReference type="EMBL" id="AF021797">
    <property type="protein sequence ID" value="AAC08303.1"/>
    <property type="molecule type" value="Genomic_DNA"/>
</dbReference>
<dbReference type="SMR" id="O59894"/>
<dbReference type="GO" id="GO:0005829">
    <property type="term" value="C:cytosol"/>
    <property type="evidence" value="ECO:0007669"/>
    <property type="project" value="UniProtKB-SubCell"/>
</dbReference>
<dbReference type="GO" id="GO:0005782">
    <property type="term" value="C:peroxisomal matrix"/>
    <property type="evidence" value="ECO:0007669"/>
    <property type="project" value="UniProtKB-SubCell"/>
</dbReference>
<dbReference type="GO" id="GO:0005053">
    <property type="term" value="F:peroxisome matrix targeting signal-2 binding"/>
    <property type="evidence" value="ECO:0007669"/>
    <property type="project" value="InterPro"/>
</dbReference>
<dbReference type="GO" id="GO:0016558">
    <property type="term" value="P:protein import into peroxisome matrix"/>
    <property type="evidence" value="ECO:0007669"/>
    <property type="project" value="InterPro"/>
</dbReference>
<dbReference type="Gene3D" id="2.130.10.10">
    <property type="entry name" value="YVTN repeat-like/Quinoprotein amine dehydrogenase"/>
    <property type="match status" value="1"/>
</dbReference>
<dbReference type="InterPro" id="IPR044536">
    <property type="entry name" value="PEX7"/>
</dbReference>
<dbReference type="InterPro" id="IPR015943">
    <property type="entry name" value="WD40/YVTN_repeat-like_dom_sf"/>
</dbReference>
<dbReference type="InterPro" id="IPR019775">
    <property type="entry name" value="WD40_repeat_CS"/>
</dbReference>
<dbReference type="InterPro" id="IPR036322">
    <property type="entry name" value="WD40_repeat_dom_sf"/>
</dbReference>
<dbReference type="InterPro" id="IPR001680">
    <property type="entry name" value="WD40_rpt"/>
</dbReference>
<dbReference type="PANTHER" id="PTHR46027">
    <property type="entry name" value="PEROXISOMAL TARGETING SIGNAL 2 RECEPTOR"/>
    <property type="match status" value="1"/>
</dbReference>
<dbReference type="PANTHER" id="PTHR46027:SF1">
    <property type="entry name" value="PEROXISOMAL TARGETING SIGNAL 2 RECEPTOR"/>
    <property type="match status" value="1"/>
</dbReference>
<dbReference type="Pfam" id="PF00400">
    <property type="entry name" value="WD40"/>
    <property type="match status" value="4"/>
</dbReference>
<dbReference type="SMART" id="SM00320">
    <property type="entry name" value="WD40"/>
    <property type="match status" value="6"/>
</dbReference>
<dbReference type="SUPFAM" id="SSF50978">
    <property type="entry name" value="WD40 repeat-like"/>
    <property type="match status" value="1"/>
</dbReference>
<dbReference type="PROSITE" id="PS00678">
    <property type="entry name" value="WD_REPEATS_1"/>
    <property type="match status" value="3"/>
</dbReference>
<dbReference type="PROSITE" id="PS50082">
    <property type="entry name" value="WD_REPEATS_2"/>
    <property type="match status" value="2"/>
</dbReference>
<dbReference type="PROSITE" id="PS50294">
    <property type="entry name" value="WD_REPEATS_REGION"/>
    <property type="match status" value="1"/>
</dbReference>
<protein>
    <recommendedName>
        <fullName evidence="6">Peroxisomal targeting signal 2 receptor</fullName>
        <shortName evidence="6">PTS2 receptor</shortName>
    </recommendedName>
    <alternativeName>
        <fullName evidence="5">Peroxin-7</fullName>
    </alternativeName>
</protein>
<name>PEX7_PICPA</name>
<keyword id="KW-0963">Cytoplasm</keyword>
<keyword id="KW-0576">Peroxisome</keyword>
<keyword id="KW-0653">Protein transport</keyword>
<keyword id="KW-0675">Receptor</keyword>
<keyword id="KW-0677">Repeat</keyword>
<keyword id="KW-0813">Transport</keyword>
<keyword id="KW-0832">Ubl conjugation</keyword>
<keyword id="KW-0853">WD repeat</keyword>
<sequence length="376" mass="42422">MFKFQTNGFSGYAVRYSPFYDNKIAVATSANYGLVGNGRLYVLSIMDDGNIITDISYDTQDGLFGVAWSETNENHVLTSSGDGCVSLFDTTLKDYPVMKFTEHQREVFSVDWSNIDKNLFCSASWDGSVKVWSPGSNRNTSLLTLRSLASREEKTGRIEKPIPVVQPSQVPMSKTRPNIRNDNNDCVYDAKFSFHDPNIIMSCNSDSHLQLWDTRLPNPLFMDFVAHNGLEALSCDFNRYRPFVVASAGVDKLAKVWDTRMIQPNVHSRPPRALNKFMGHEFAIRKLAWSPHGPTQLLTCSYDMTVRVWNDSPSPTSRVGLLDGASQPHAPPCSKIFSAHTEFVMGCDWSLWGEPGWVVTTGWDEMVYVWNTQRLQ</sequence>
<feature type="chain" id="PRO_0000051118" description="Peroxisomal targeting signal 2 receptor">
    <location>
        <begin position="1"/>
        <end position="376"/>
    </location>
</feature>
<feature type="repeat" description="WD 1" evidence="1">
    <location>
        <begin position="58"/>
        <end position="98"/>
    </location>
</feature>
<feature type="repeat" description="WD 2" evidence="1">
    <location>
        <begin position="102"/>
        <end position="142"/>
    </location>
</feature>
<feature type="repeat" description="WD 3" evidence="1">
    <location>
        <begin position="182"/>
        <end position="222"/>
    </location>
</feature>
<feature type="repeat" description="WD 4" evidence="1">
    <location>
        <begin position="226"/>
        <end position="267"/>
    </location>
</feature>
<feature type="repeat" description="WD 5" evidence="1">
    <location>
        <begin position="279"/>
        <end position="319"/>
    </location>
</feature>
<feature type="repeat" description="WD 6" evidence="1">
    <location>
        <begin position="339"/>
        <end position="376"/>
    </location>
</feature>
<reference key="1">
    <citation type="journal article" date="1998" name="J. Cell Biol.">
        <title>A mobile PTS2 receptor for peroxisomal protein import in Pichia pastoris.</title>
        <authorList>
            <person name="Elgersma Y."/>
            <person name="Elgersma-Hooisma M."/>
            <person name="Wenzel T."/>
            <person name="McCaffery J.M."/>
            <person name="Farquhar M.G."/>
            <person name="Subramani S."/>
        </authorList>
    </citation>
    <scope>NUCLEOTIDE SEQUENCE [GENOMIC DNA]</scope>
    <scope>FUNCTION</scope>
    <scope>DISRUPTION PHENOTYPE</scope>
    <scope>SUBCELLULAR LOCATION</scope>
    <source>
        <strain>PPY12</strain>
    </source>
</reference>
<reference key="2">
    <citation type="journal article" date="2006" name="J. Cell Biol.">
        <title>Dynamics of the peroxisomal import cycle of PpPex20p: ubiquitin-dependent localization and regulation.</title>
        <authorList>
            <person name="Leon S."/>
            <person name="Zhang L."/>
            <person name="McDonald W.H."/>
            <person name="Yates J. III"/>
            <person name="Cregg J.M."/>
            <person name="Subramani S."/>
        </authorList>
    </citation>
    <scope>INTERACTION WITH PEX20</scope>
</reference>
<reference key="3">
    <citation type="journal article" date="2014" name="Mol. Biol. Cell">
        <title>The unique degradation pathway of the PTS2 receptor, Pex7, is dependent on the PTS receptor/coreceptor, Pex5 and Pex20.</title>
        <authorList>
            <person name="Hagstrom D."/>
            <person name="Ma C."/>
            <person name="Guha-Polley S."/>
            <person name="Subramani S."/>
        </authorList>
    </citation>
    <scope>FUNCTION</scope>
    <scope>SUBCELLULAR LOCATION</scope>
    <scope>INTERACTION WITH PEX20</scope>
    <scope>UBIQUITINATION</scope>
</reference>
<proteinExistence type="evidence at protein level"/>
<organism>
    <name type="scientific">Komagataella pastoris</name>
    <name type="common">Yeast</name>
    <name type="synonym">Pichia pastoris</name>
    <dbReference type="NCBI Taxonomy" id="4922"/>
    <lineage>
        <taxon>Eukaryota</taxon>
        <taxon>Fungi</taxon>
        <taxon>Dikarya</taxon>
        <taxon>Ascomycota</taxon>
        <taxon>Saccharomycotina</taxon>
        <taxon>Pichiomycetes</taxon>
        <taxon>Pichiales</taxon>
        <taxon>Pichiaceae</taxon>
        <taxon>Komagataella</taxon>
    </lineage>
</organism>
<evidence type="ECO:0000255" key="1"/>
<evidence type="ECO:0000269" key="2">
    <source>
    </source>
</evidence>
<evidence type="ECO:0000269" key="3">
    <source>
    </source>
</evidence>
<evidence type="ECO:0000269" key="4">
    <source>
    </source>
</evidence>
<evidence type="ECO:0000303" key="5">
    <source>
    </source>
</evidence>
<evidence type="ECO:0000303" key="6">
    <source>
    </source>
</evidence>
<evidence type="ECO:0000305" key="7"/>